<keyword id="KW-0002">3D-structure</keyword>
<keyword id="KW-0025">Alternative splicing</keyword>
<keyword id="KW-0175">Coiled coil</keyword>
<keyword id="KW-0221">Differentiation</keyword>
<keyword id="KW-1015">Disulfide bond</keyword>
<keyword id="KW-1017">Isopeptide bond</keyword>
<keyword id="KW-0469">Meiosis</keyword>
<keyword id="KW-0472">Membrane</keyword>
<keyword id="KW-0539">Nucleus</keyword>
<keyword id="KW-0597">Phosphoprotein</keyword>
<keyword id="KW-1267">Proteomics identification</keyword>
<keyword id="KW-1185">Reference proteome</keyword>
<keyword id="KW-0735">Signal-anchor</keyword>
<keyword id="KW-0744">Spermatogenesis</keyword>
<keyword id="KW-0812">Transmembrane</keyword>
<keyword id="KW-1133">Transmembrane helix</keyword>
<keyword id="KW-0832">Ubl conjugation</keyword>
<gene>
    <name evidence="23" type="primary">SUN1</name>
    <name type="synonym">KIAA0810</name>
    <name type="synonym">UNC84A</name>
</gene>
<feature type="chain" id="PRO_0000218911" description="SUN domain-containing protein 1">
    <location>
        <begin position="1"/>
        <end position="785"/>
    </location>
</feature>
<feature type="topological domain" description="Nuclear" evidence="14">
    <location>
        <begin position="1"/>
        <end position="288"/>
    </location>
</feature>
<feature type="transmembrane region" description="Helical">
    <location>
        <begin position="289"/>
        <end position="308"/>
    </location>
</feature>
<feature type="topological domain" description="Perinuclear space" evidence="14">
    <location>
        <begin position="309"/>
        <end position="785"/>
    </location>
</feature>
<feature type="domain" description="SUN" evidence="5">
    <location>
        <begin position="622"/>
        <end position="784"/>
    </location>
</feature>
<feature type="region of interest" description="LMNA-binding" evidence="2">
    <location>
        <begin position="1"/>
        <end position="138"/>
    </location>
</feature>
<feature type="region of interest" description="Sufficient for interaction with SYNE1 and SYNE2" evidence="3">
    <location>
        <begin position="574"/>
        <end position="785"/>
    </location>
</feature>
<feature type="coiled-coil region" evidence="4">
    <location>
        <begin position="428"/>
        <end position="495"/>
    </location>
</feature>
<feature type="modified residue" description="Phosphoserine" evidence="26">
    <location>
        <position position="48"/>
    </location>
</feature>
<feature type="modified residue" description="Phosphoserine" evidence="25">
    <location>
        <position position="100"/>
    </location>
</feature>
<feature type="modified residue" description="Phosphoserine" evidence="24 25 26 27">
    <location>
        <position position="138"/>
    </location>
</feature>
<feature type="modified residue" description="Phosphoserine" evidence="26">
    <location>
        <position position="344"/>
    </location>
</feature>
<feature type="disulfide bond" description="Interchain (with KASH domain-containing nesprins)" evidence="3">
    <location>
        <position position="630"/>
    </location>
</feature>
<feature type="cross-link" description="Glycyl lysine isopeptide (Lys-Gly) (interchain with G-Cter in SUMO2)" evidence="28">
    <location>
        <position position="195"/>
    </location>
</feature>
<feature type="splice variant" id="VSP_061216" description="In isoform 5." evidence="19">
    <location>
        <begin position="1"/>
        <end position="50"/>
    </location>
</feature>
<feature type="splice variant" id="VSP_061217" description="In isoform 7." evidence="19">
    <original>M</original>
    <variation>MGRISPGSPGLPRTVWFEVVNM</variation>
    <location>
        <position position="1"/>
    </location>
</feature>
<feature type="splice variant" id="VSP_061218" description="In isoform 4." evidence="21">
    <original>R</original>
    <variation>V</variation>
    <location>
        <position position="109"/>
    </location>
</feature>
<feature type="splice variant" id="VSP_061219" description="In isoform 4." evidence="21">
    <location>
        <begin position="110"/>
        <end position="785"/>
    </location>
</feature>
<feature type="splice variant" id="VSP_061220" description="In isoform 6." evidence="19">
    <original>LDDDGDLKGGNKAAIQGNGDVGAAAATAHNGFSCSNCSMLSERKDVLTAHPAAPGPVSRVYSRDRNQKCYFLLQILRRIGAVGQAVSRTAWSALWLAVVAPGK</original>
    <variation>K</variation>
    <location>
        <begin position="152"/>
        <end position="254"/>
    </location>
</feature>
<feature type="splice variant" id="VSP_061221" description="In isoform 5." evidence="19">
    <original>CYFLLQILRRIGAVGQAVSRTAWSALWLAVVAPG</original>
    <variation>W</variation>
    <location>
        <begin position="220"/>
        <end position="253"/>
    </location>
</feature>
<feature type="splice variant" id="VSP_061222" description="In isoform 8.">
    <original>C</original>
    <variation>CGASFYVNRILWLARYTASSFSSFLVQLFQVVLMKLSYESENYKLKTHESKDCESESYKSKSHESKAHASYYGRMNVREVLREDGHLSVNGEALCDDCKGKRHLDAHTAAHSQSPRLPGRAGTLWHIWACAG</variation>
    <location>
        <position position="220"/>
    </location>
</feature>
<feature type="splice variant" id="VSP_061223" description="In isoform 3." evidence="19">
    <original>YFLLQILRRIGAVGQAVSRTAWSALWLAVVAPGKAASGVFWWLGIGWYQFVTLISWLNVFLLTRCLRNICKFLVLLIPLFLLLAGLSLRGQGNFFSFLPVLNWASMHRTQRVDDPQDVFKP</original>
    <variation>GASFYVNRILWLARYTASSFSSFLVQLFQVVLMKLSYESENYKLKTHESKDCESESYKSKSHESKAHASYYGRMNVREVLREDGHLSVNGEALCKYGFVFLWASVVELVPHAVMLGTSSRE</variation>
    <location>
        <begin position="221"/>
        <end position="341"/>
    </location>
</feature>
<feature type="splice variant" id="VSP_061224" description="In isoform 2 and isoform 7." evidence="19 20">
    <original>YFLLQILRRIGAVGQAVSRTAWSALWLAVVAPGKAAS</original>
    <variation>KSQSFKTQKKVCFPNLIFPFCKSQCLHYLSWRLKIIP</variation>
    <location>
        <begin position="221"/>
        <end position="257"/>
    </location>
</feature>
<feature type="splice variant" id="VSP_061225" description="In isoform 2 and isoform 7." evidence="19 20">
    <location>
        <begin position="258"/>
        <end position="785"/>
    </location>
</feature>
<feature type="splice variant" id="VSP_061226" description="In isoform 3." evidence="19">
    <location>
        <begin position="342"/>
        <end position="785"/>
    </location>
</feature>
<feature type="sequence variant" id="VAR_059828" description="In dbSNP:rs6461378." evidence="7 8 18">
    <original>H</original>
    <variation>Y</variation>
    <location>
        <position position="118"/>
    </location>
</feature>
<feature type="sequence variant" id="VAR_071065" description="In dbSNP:rs144929525." evidence="16">
    <original>A</original>
    <variation>V</variation>
    <location>
        <position position="203"/>
    </location>
</feature>
<feature type="sequence variant" id="VAR_071066" description="In dbSNP:rs114701323." evidence="16">
    <original>A</original>
    <variation>V</variation>
    <location>
        <position position="587"/>
    </location>
</feature>
<feature type="sequence conflict" description="In Ref. 3; CAD98070." evidence="22" ref="3">
    <original>V</original>
    <variation>A</variation>
    <location>
        <position position="15"/>
    </location>
</feature>
<feature type="sequence conflict" description="In Ref. 3; CAD98070." evidence="22" ref="3">
    <original>S</original>
    <variation>G</variation>
    <location>
        <position position="78"/>
    </location>
</feature>
<feature type="sequence conflict" description="In Ref. 1; BAA34530." evidence="22" ref="1">
    <original>A</original>
    <variation>V</variation>
    <location>
        <position position="174"/>
    </location>
</feature>
<feature type="sequence conflict" description="In Ref. 5; AAH13613." evidence="22" ref="5">
    <original>A</original>
    <variation>P</variation>
    <location>
        <position position="204"/>
    </location>
</feature>
<feature type="sequence conflict" description="In Ref. 2; BAG64069." evidence="22" ref="2">
    <location>
        <position position="304"/>
    </location>
</feature>
<feature type="sequence conflict" description="In Ref. 2; BAG51119." evidence="22" ref="2">
    <original>P</original>
    <variation>L</variation>
    <location>
        <position position="418"/>
    </location>
</feature>
<feature type="sequence conflict" description="In Ref. 2; BAG64069." evidence="22" ref="2">
    <original>E</original>
    <variation>K</variation>
    <location>
        <position position="476"/>
    </location>
</feature>
<feature type="sequence conflict" description="In Ref. 2; BAG51119." evidence="22" ref="2">
    <original>R</original>
    <variation>Q</variation>
    <location>
        <position position="493"/>
    </location>
</feature>
<feature type="strand" evidence="30">
    <location>
        <begin position="142"/>
        <end position="147"/>
    </location>
</feature>
<feature type="strand" evidence="30">
    <location>
        <begin position="149"/>
        <end position="151"/>
    </location>
</feature>
<feature type="helix" evidence="29">
    <location>
        <begin position="592"/>
        <end position="607"/>
    </location>
</feature>
<feature type="turn" evidence="29">
    <location>
        <begin position="608"/>
        <end position="611"/>
    </location>
</feature>
<feature type="helix" evidence="29">
    <location>
        <begin position="619"/>
        <end position="621"/>
    </location>
</feature>
<feature type="helix" evidence="29">
    <location>
        <begin position="627"/>
        <end position="629"/>
    </location>
</feature>
<feature type="strand" evidence="29">
    <location>
        <begin position="639"/>
        <end position="643"/>
    </location>
</feature>
<feature type="strand" evidence="29">
    <location>
        <begin position="646"/>
        <end position="651"/>
    </location>
</feature>
<feature type="helix" evidence="29">
    <location>
        <begin position="655"/>
        <end position="659"/>
    </location>
</feature>
<feature type="strand" evidence="29">
    <location>
        <begin position="668"/>
        <end position="674"/>
    </location>
</feature>
<feature type="strand" evidence="29">
    <location>
        <begin position="676"/>
        <end position="694"/>
    </location>
</feature>
<feature type="helix" evidence="29">
    <location>
        <begin position="698"/>
        <end position="700"/>
    </location>
</feature>
<feature type="strand" evidence="29">
    <location>
        <begin position="712"/>
        <end position="720"/>
    </location>
</feature>
<feature type="strand" evidence="29">
    <location>
        <begin position="727"/>
        <end position="733"/>
    </location>
</feature>
<feature type="strand" evidence="29">
    <location>
        <begin position="740"/>
        <end position="745"/>
    </location>
</feature>
<feature type="strand" evidence="29">
    <location>
        <begin position="755"/>
        <end position="762"/>
    </location>
</feature>
<feature type="strand" evidence="29">
    <location>
        <begin position="765"/>
        <end position="767"/>
    </location>
</feature>
<feature type="strand" evidence="29">
    <location>
        <begin position="769"/>
        <end position="774"/>
    </location>
</feature>
<feature type="strand" evidence="29">
    <location>
        <begin position="776"/>
        <end position="783"/>
    </location>
</feature>
<feature type="region of interest" description="SYNE2-binding" evidence="2">
    <location sequence="O94901-9">
        <begin position="209"/>
        <end position="309"/>
    </location>
</feature>
<feature type="region of interest" description="EMD-binding" evidence="2">
    <location sequence="O94901-9">
        <begin position="223"/>
        <end position="309"/>
    </location>
</feature>
<feature type="modified residue" description="Phosphoserine" evidence="25">
    <location sequence="O94901-9">
        <position position="333"/>
    </location>
</feature>
<dbReference type="EMBL" id="AB018353">
    <property type="protein sequence ID" value="BAA34530.1"/>
    <property type="status" value="ALT_SEQ"/>
    <property type="molecule type" value="mRNA"/>
</dbReference>
<dbReference type="EMBL" id="AK022469">
    <property type="protein sequence ID" value="BAB14046.1"/>
    <property type="molecule type" value="mRNA"/>
</dbReference>
<dbReference type="EMBL" id="AK022816">
    <property type="protein sequence ID" value="BAG51119.1"/>
    <property type="molecule type" value="mRNA"/>
</dbReference>
<dbReference type="EMBL" id="AK302896">
    <property type="protein sequence ID" value="BAG64069.1"/>
    <property type="molecule type" value="mRNA"/>
</dbReference>
<dbReference type="EMBL" id="AK309120">
    <property type="status" value="NOT_ANNOTATED_CDS"/>
    <property type="molecule type" value="mRNA"/>
</dbReference>
<dbReference type="EMBL" id="BX538211">
    <property type="protein sequence ID" value="CAD98070.1"/>
    <property type="molecule type" value="mRNA"/>
</dbReference>
<dbReference type="EMBL" id="AC073957">
    <property type="status" value="NOT_ANNOTATED_CDS"/>
    <property type="molecule type" value="Genomic_DNA"/>
</dbReference>
<dbReference type="EMBL" id="AC099731">
    <property type="status" value="NOT_ANNOTATED_CDS"/>
    <property type="molecule type" value="Genomic_DNA"/>
</dbReference>
<dbReference type="EMBL" id="BC013613">
    <property type="protein sequence ID" value="AAH13613.1"/>
    <property type="molecule type" value="mRNA"/>
</dbReference>
<dbReference type="EMBL" id="BC142707">
    <property type="protein sequence ID" value="AAI42708.1"/>
    <property type="molecule type" value="mRNA"/>
</dbReference>
<dbReference type="EMBL" id="AF202724">
    <property type="protein sequence ID" value="AAF15888.1"/>
    <property type="molecule type" value="mRNA"/>
</dbReference>
<dbReference type="CCDS" id="CCDS43533.1">
    <molecule id="O94901-5"/>
</dbReference>
<dbReference type="CCDS" id="CCDS47525.1">
    <molecule id="O94901-8"/>
</dbReference>
<dbReference type="CCDS" id="CCDS55078.1">
    <molecule id="O94901-7"/>
</dbReference>
<dbReference type="CCDS" id="CCDS55079.1">
    <molecule id="O94901-2"/>
</dbReference>
<dbReference type="RefSeq" id="NP_001124437.1">
    <molecule id="O94901-8"/>
    <property type="nucleotide sequence ID" value="NM_001130965.3"/>
</dbReference>
<dbReference type="RefSeq" id="NP_001165415.1">
    <property type="nucleotide sequence ID" value="NM_001171944.1"/>
</dbReference>
<dbReference type="RefSeq" id="NP_001165416.1">
    <molecule id="O94901-7"/>
    <property type="nucleotide sequence ID" value="NM_001171945.2"/>
</dbReference>
<dbReference type="RefSeq" id="NP_001165417.1">
    <molecule id="O94901-2"/>
    <property type="nucleotide sequence ID" value="NM_001171946.2"/>
</dbReference>
<dbReference type="RefSeq" id="NP_001354562.1">
    <molecule id="O94901-8"/>
    <property type="nucleotide sequence ID" value="NM_001367633.1"/>
</dbReference>
<dbReference type="RefSeq" id="NP_001354563.1">
    <molecule id="O94901-8"/>
    <property type="nucleotide sequence ID" value="NM_001367634.1"/>
</dbReference>
<dbReference type="RefSeq" id="NP_001354634.1">
    <molecule id="O94901-9"/>
    <property type="nucleotide sequence ID" value="NM_001367705.1"/>
</dbReference>
<dbReference type="RefSeq" id="NP_079430.3">
    <molecule id="O94901-5"/>
    <property type="nucleotide sequence ID" value="NM_025154.5"/>
</dbReference>
<dbReference type="PDB" id="6R15">
    <property type="method" value="X-ray"/>
    <property type="resolution" value="1.82 A"/>
    <property type="chains" value="A=589-785"/>
</dbReference>
<dbReference type="PDB" id="6R16">
    <property type="method" value="X-ray"/>
    <property type="resolution" value="2.75 A"/>
    <property type="chains" value="A/B/C/D/E/F=589-785"/>
</dbReference>
<dbReference type="PDB" id="6R2I">
    <property type="method" value="X-ray"/>
    <property type="resolution" value="1.54 A"/>
    <property type="chains" value="A=589-785"/>
</dbReference>
<dbReference type="PDB" id="7E34">
    <property type="method" value="X-ray"/>
    <property type="resolution" value="3.19 A"/>
    <property type="chains" value="C=126-171"/>
</dbReference>
<dbReference type="PDB" id="7Z8Y">
    <property type="method" value="X-ray"/>
    <property type="resolution" value="2.29 A"/>
    <property type="chains" value="A/B/C=589-785"/>
</dbReference>
<dbReference type="PDB" id="8AU0">
    <property type="method" value="X-ray"/>
    <property type="resolution" value="2.07 A"/>
    <property type="chains" value="A/B/C=362-401"/>
</dbReference>
<dbReference type="PDB" id="8B46">
    <property type="method" value="X-ray"/>
    <property type="resolution" value="1.67 A"/>
    <property type="chains" value="A/B/C=589-785"/>
</dbReference>
<dbReference type="PDB" id="8B5X">
    <property type="method" value="X-ray"/>
    <property type="resolution" value="1.98 A"/>
    <property type="chains" value="A/B/C=589-785"/>
</dbReference>
<dbReference type="PDBsum" id="6R15"/>
<dbReference type="PDBsum" id="6R16"/>
<dbReference type="PDBsum" id="6R2I"/>
<dbReference type="PDBsum" id="7E34"/>
<dbReference type="PDBsum" id="7Z8Y"/>
<dbReference type="PDBsum" id="8AU0"/>
<dbReference type="PDBsum" id="8B46"/>
<dbReference type="PDBsum" id="8B5X"/>
<dbReference type="SASBDB" id="O94901"/>
<dbReference type="SMR" id="O94901"/>
<dbReference type="BioGRID" id="116935">
    <property type="interactions" value="202"/>
</dbReference>
<dbReference type="ComplexPortal" id="CPX-2537">
    <property type="entry name" value="LINC complex, SUN1-KASH5 variant"/>
</dbReference>
<dbReference type="ComplexPortal" id="CPX-7668">
    <property type="entry name" value="LINC complex, SUN1-SYNE1 variant"/>
</dbReference>
<dbReference type="ComplexPortal" id="CPX-7670">
    <property type="entry name" value="LINC complex, SUN1-SYNE2 variant"/>
</dbReference>
<dbReference type="ComplexPortal" id="CPX-7673">
    <property type="entry name" value="LINC complex, SUN1-SYNE3 variant"/>
</dbReference>
<dbReference type="ComplexPortal" id="CPX-7675">
    <property type="entry name" value="LINC complex, SUN1-SYNE4 variant"/>
</dbReference>
<dbReference type="ComplexPortal" id="CPX-9521">
    <property type="entry name" value="LINC complex, SUN1-KASH6 complex"/>
</dbReference>
<dbReference type="FunCoup" id="O94901">
    <property type="interactions" value="1509"/>
</dbReference>
<dbReference type="IntAct" id="O94901">
    <property type="interactions" value="70"/>
</dbReference>
<dbReference type="MINT" id="O94901"/>
<dbReference type="STRING" id="9606.ENSP00000384015"/>
<dbReference type="TCDB" id="1.I.1.1.3">
    <property type="family name" value="the nuclear pore complex (npc) family"/>
</dbReference>
<dbReference type="GlyConnect" id="1776">
    <property type="glycosylation" value="4 N-Linked glycans (2 sites)"/>
</dbReference>
<dbReference type="GlyCosmos" id="O94901">
    <property type="glycosylation" value="4 sites, 5 glycans"/>
</dbReference>
<dbReference type="GlyGen" id="O94901">
    <property type="glycosylation" value="3 sites, 1 O-linked glycan (1 site)"/>
</dbReference>
<dbReference type="iPTMnet" id="O94901"/>
<dbReference type="MetOSite" id="O94901"/>
<dbReference type="PhosphoSitePlus" id="O94901"/>
<dbReference type="SwissPalm" id="O94901"/>
<dbReference type="BioMuta" id="SUN1"/>
<dbReference type="CPTAC" id="CPTAC-1297"/>
<dbReference type="CPTAC" id="CPTAC-1509"/>
<dbReference type="jPOST" id="O94901"/>
<dbReference type="MassIVE" id="O94901"/>
<dbReference type="PaxDb" id="9606-ENSP00000384015"/>
<dbReference type="PeptideAtlas" id="O94901"/>
<dbReference type="ProteomicsDB" id="19748"/>
<dbReference type="ProteomicsDB" id="20009"/>
<dbReference type="ProteomicsDB" id="31341"/>
<dbReference type="ProteomicsDB" id="50533">
    <molecule id="O94901-2"/>
</dbReference>
<dbReference type="ProteomicsDB" id="50534">
    <molecule id="O94901-3"/>
</dbReference>
<dbReference type="ProteomicsDB" id="50535">
    <molecule id="O94901-4"/>
</dbReference>
<dbReference type="ProteomicsDB" id="50536">
    <molecule id="O94901-5"/>
</dbReference>
<dbReference type="Pumba" id="O94901"/>
<dbReference type="Antibodypedia" id="1893">
    <property type="antibodies" value="116 antibodies from 26 providers"/>
</dbReference>
<dbReference type="DNASU" id="23353"/>
<dbReference type="Ensembl" id="ENST00000389574.7">
    <molecule id="O94901-5"/>
    <property type="protein sequence ID" value="ENSP00000374225.3"/>
    <property type="gene ID" value="ENSG00000164828.18"/>
</dbReference>
<dbReference type="Ensembl" id="ENST00000401592.6">
    <molecule id="O94901-8"/>
    <property type="protein sequence ID" value="ENSP00000384015.1"/>
    <property type="gene ID" value="ENSG00000164828.18"/>
</dbReference>
<dbReference type="Ensembl" id="ENST00000403868.5">
    <molecule id="O94901-2"/>
    <property type="protein sequence ID" value="ENSP00000383947.1"/>
    <property type="gene ID" value="ENSG00000164828.18"/>
</dbReference>
<dbReference type="Ensembl" id="ENST00000425407.6">
    <molecule id="O94901-5"/>
    <property type="protein sequence ID" value="ENSP00000392309.2"/>
    <property type="gene ID" value="ENSG00000164828.18"/>
</dbReference>
<dbReference type="Ensembl" id="ENST00000457378.6">
    <molecule id="O94901-7"/>
    <property type="protein sequence ID" value="ENSP00000395952.2"/>
    <property type="gene ID" value="ENSG00000164828.18"/>
</dbReference>
<dbReference type="GeneID" id="23353"/>
<dbReference type="KEGG" id="hsa:23353"/>
<dbReference type="MANE-Select" id="ENST00000401592.6">
    <property type="protein sequence ID" value="ENSP00000384015.1"/>
    <property type="RefSeq nucleotide sequence ID" value="NM_001130965.3"/>
    <property type="RefSeq protein sequence ID" value="NP_001124437.1"/>
</dbReference>
<dbReference type="UCSC" id="uc003sjf.4">
    <molecule id="O94901-8"/>
    <property type="organism name" value="human"/>
</dbReference>
<dbReference type="AGR" id="HGNC:18587"/>
<dbReference type="CTD" id="23353"/>
<dbReference type="DisGeNET" id="23353"/>
<dbReference type="GeneCards" id="SUN1"/>
<dbReference type="HGNC" id="HGNC:18587">
    <property type="gene designation" value="SUN1"/>
</dbReference>
<dbReference type="HPA" id="ENSG00000164828">
    <property type="expression patterns" value="Low tissue specificity"/>
</dbReference>
<dbReference type="MalaCards" id="SUN1"/>
<dbReference type="MIM" id="607723">
    <property type="type" value="gene"/>
</dbReference>
<dbReference type="neXtProt" id="NX_O94901"/>
<dbReference type="OpenTargets" id="ENSG00000164828"/>
<dbReference type="PharmGKB" id="PA165618311"/>
<dbReference type="VEuPathDB" id="HostDB:ENSG00000164828"/>
<dbReference type="eggNOG" id="KOG2687">
    <property type="taxonomic scope" value="Eukaryota"/>
</dbReference>
<dbReference type="GeneTree" id="ENSGT00940000155830"/>
<dbReference type="HOGENOM" id="CLU_012938_0_0_1"/>
<dbReference type="InParanoid" id="O94901"/>
<dbReference type="OrthoDB" id="342281at2759"/>
<dbReference type="PAN-GO" id="O94901">
    <property type="GO annotations" value="4 GO annotations based on evolutionary models"/>
</dbReference>
<dbReference type="PhylomeDB" id="O94901"/>
<dbReference type="TreeFam" id="TF323915"/>
<dbReference type="PathwayCommons" id="O94901"/>
<dbReference type="Reactome" id="R-HSA-1221632">
    <property type="pathway name" value="Meiotic synapsis"/>
</dbReference>
<dbReference type="SignaLink" id="O94901"/>
<dbReference type="SIGNOR" id="O94901"/>
<dbReference type="BioGRID-ORCS" id="23353">
    <property type="hits" value="13 hits in 1161 CRISPR screens"/>
</dbReference>
<dbReference type="ChiTaRS" id="SUN1">
    <property type="organism name" value="human"/>
</dbReference>
<dbReference type="GeneWiki" id="UNC84A"/>
<dbReference type="GenomeRNAi" id="23353"/>
<dbReference type="Pharos" id="O94901">
    <property type="development level" value="Tbio"/>
</dbReference>
<dbReference type="PRO" id="PR:O94901"/>
<dbReference type="Proteomes" id="UP000005640">
    <property type="component" value="Chromosome 7"/>
</dbReference>
<dbReference type="RNAct" id="O94901">
    <property type="molecule type" value="protein"/>
</dbReference>
<dbReference type="Bgee" id="ENSG00000164828">
    <property type="expression patterns" value="Expressed in secondary oocyte and 205 other cell types or tissues"/>
</dbReference>
<dbReference type="ExpressionAtlas" id="O94901">
    <property type="expression patterns" value="baseline and differential"/>
</dbReference>
<dbReference type="GO" id="GO:0000781">
    <property type="term" value="C:chromosome, telomeric region"/>
    <property type="evidence" value="ECO:0007669"/>
    <property type="project" value="Ensembl"/>
</dbReference>
<dbReference type="GO" id="GO:0005737">
    <property type="term" value="C:cytoplasm"/>
    <property type="evidence" value="ECO:0007669"/>
    <property type="project" value="Ensembl"/>
</dbReference>
<dbReference type="GO" id="GO:0043231">
    <property type="term" value="C:intracellular membrane-bounded organelle"/>
    <property type="evidence" value="ECO:0000314"/>
    <property type="project" value="HPA"/>
</dbReference>
<dbReference type="GO" id="GO:0034993">
    <property type="term" value="C:meiotic nuclear membrane microtubule tethering complex"/>
    <property type="evidence" value="ECO:0000314"/>
    <property type="project" value="UniProtKB"/>
</dbReference>
<dbReference type="GO" id="GO:0005635">
    <property type="term" value="C:nuclear envelope"/>
    <property type="evidence" value="ECO:0000314"/>
    <property type="project" value="UniProtKB"/>
</dbReference>
<dbReference type="GO" id="GO:0005637">
    <property type="term" value="C:nuclear inner membrane"/>
    <property type="evidence" value="ECO:0007669"/>
    <property type="project" value="UniProtKB-SubCell"/>
</dbReference>
<dbReference type="GO" id="GO:0031965">
    <property type="term" value="C:nuclear membrane"/>
    <property type="evidence" value="ECO:0000314"/>
    <property type="project" value="HPA"/>
</dbReference>
<dbReference type="GO" id="GO:0140444">
    <property type="term" value="F:cytoskeleton-nuclear membrane anchor activity"/>
    <property type="evidence" value="ECO:0000314"/>
    <property type="project" value="GO_Central"/>
</dbReference>
<dbReference type="GO" id="GO:0042802">
    <property type="term" value="F:identical protein binding"/>
    <property type="evidence" value="ECO:0000353"/>
    <property type="project" value="IntAct"/>
</dbReference>
<dbReference type="GO" id="GO:0005521">
    <property type="term" value="F:lamin binding"/>
    <property type="evidence" value="ECO:0007669"/>
    <property type="project" value="Ensembl"/>
</dbReference>
<dbReference type="GO" id="GO:0043495">
    <property type="term" value="F:protein-membrane adaptor activity"/>
    <property type="evidence" value="ECO:0000318"/>
    <property type="project" value="GO_Central"/>
</dbReference>
<dbReference type="GO" id="GO:0051642">
    <property type="term" value="P:centrosome localization"/>
    <property type="evidence" value="ECO:0007669"/>
    <property type="project" value="Ensembl"/>
</dbReference>
<dbReference type="GO" id="GO:0007129">
    <property type="term" value="P:homologous chromosome pairing at meiosis"/>
    <property type="evidence" value="ECO:0007669"/>
    <property type="project" value="Ensembl"/>
</dbReference>
<dbReference type="GO" id="GO:0070197">
    <property type="term" value="P:meiotic attachment of telomere to nuclear envelope"/>
    <property type="evidence" value="ECO:0007669"/>
    <property type="project" value="Ensembl"/>
</dbReference>
<dbReference type="GO" id="GO:0090292">
    <property type="term" value="P:nuclear matrix anchoring at nuclear membrane"/>
    <property type="evidence" value="ECO:0000314"/>
    <property type="project" value="UniProtKB"/>
</dbReference>
<dbReference type="GO" id="GO:0021817">
    <property type="term" value="P:nucleokinesis involved in cell motility in cerebral cortex radial glia guided migration"/>
    <property type="evidence" value="ECO:0007669"/>
    <property type="project" value="Ensembl"/>
</dbReference>
<dbReference type="GO" id="GO:0001503">
    <property type="term" value="P:ossification"/>
    <property type="evidence" value="ECO:0007669"/>
    <property type="project" value="Ensembl"/>
</dbReference>
<dbReference type="GO" id="GO:0009612">
    <property type="term" value="P:response to mechanical stimulus"/>
    <property type="evidence" value="ECO:0007669"/>
    <property type="project" value="Ensembl"/>
</dbReference>
<dbReference type="GO" id="GO:0007283">
    <property type="term" value="P:spermatogenesis"/>
    <property type="evidence" value="ECO:0007669"/>
    <property type="project" value="UniProtKB-KW"/>
</dbReference>
<dbReference type="CDD" id="cd21439">
    <property type="entry name" value="SUN1_cc1"/>
    <property type="match status" value="1"/>
</dbReference>
<dbReference type="FunFam" id="2.60.120.260:FF:000009">
    <property type="entry name" value="SUN domain-containing protein 1 isoform X1"/>
    <property type="match status" value="1"/>
</dbReference>
<dbReference type="Gene3D" id="2.60.120.260">
    <property type="entry name" value="Galactose-binding domain-like"/>
    <property type="match status" value="1"/>
</dbReference>
<dbReference type="InterPro" id="IPR045119">
    <property type="entry name" value="SUN1-5"/>
</dbReference>
<dbReference type="InterPro" id="IPR032680">
    <property type="entry name" value="SUN1_N"/>
</dbReference>
<dbReference type="InterPro" id="IPR040994">
    <property type="entry name" value="Sun_CC2"/>
</dbReference>
<dbReference type="InterPro" id="IPR012919">
    <property type="entry name" value="SUN_dom"/>
</dbReference>
<dbReference type="PANTHER" id="PTHR12911">
    <property type="entry name" value="SAD1/UNC-84-LIKE PROTEIN-RELATED"/>
    <property type="match status" value="1"/>
</dbReference>
<dbReference type="PANTHER" id="PTHR12911:SF23">
    <property type="entry name" value="SUN DOMAIN-CONTAINING PROTEIN 1"/>
    <property type="match status" value="1"/>
</dbReference>
<dbReference type="Pfam" id="PF18580">
    <property type="entry name" value="HTH_SUN2"/>
    <property type="match status" value="1"/>
</dbReference>
<dbReference type="Pfam" id="PF09387">
    <property type="entry name" value="MRP"/>
    <property type="match status" value="1"/>
</dbReference>
<dbReference type="Pfam" id="PF07738">
    <property type="entry name" value="Sad1_UNC"/>
    <property type="match status" value="1"/>
</dbReference>
<dbReference type="PROSITE" id="PS51469">
    <property type="entry name" value="SUN"/>
    <property type="match status" value="1"/>
</dbReference>
<sequence>MDFSRLHMYSPPQCVPENTGYTYALSSSYSSDALDFETEHKLDPVFDSPRMSRRSLRLATTACTLGDGEAVGADSGTSSAVSLKNRAARTTKQRRSTNKSAFSINHVSRQVTSSGVSHGGTVSLQDAVTRRPPVLDESWIREQTTVDHFWGLDDDGDLKGGNKAAIQGNGDVGAAAATAHNGFSCSNCSMLSERKDVLTAHPAAPGPVSRVYSRDRNQKCYFLLQILRRIGAVGQAVSRTAWSALWLAVVAPGKAASGVFWWLGIGWYQFVTLISWLNVFLLTRCLRNICKFLVLLIPLFLLLAGLSLRGQGNFFSFLPVLNWASMHRTQRVDDPQDVFKPTTSRLKQPLQGDSEAFPWHWMSGVEQQVASLSGQCHHHGENLRELTTLLQKLQARVDQMEGGAAGPSASVRDAVGQPPRETDFMAFHQEHEVRMSHLEDILGKLREKSEAIQKELEQTKQKTISAVGEQLLPTVEHLQLELDQLKSELSSWRHVKTGCETVDAVQERVDVQVREMVKLLFSEDQQGGSLEQLLQRFSSQFVSKGDLQTMLRDLQLQILRNVTHHVSVTKQLPTSEAVVSAVSEAGASGITEAQARAIVNSALKLYSQDKTGMVDFALESGGGSILSTRCSETYETKTALMSLFGIPLWYFSQSPRVVIQPDIYPGNCWAFKGSQGYLVVRLSMMIHPAAFTLEHIPKTLSPTGNISSAPKDFAVYGLENEYQEEGQLLGQFTYDQDGESLQMFQALKRPDDTAFQIVELRIFSNWGHPEYTCLYRFRVHGEPVK</sequence>
<accession>O94901</accession>
<accession>A5PL20</accession>
<accession>B3KMV7</accession>
<accession>B4DZF7</accession>
<accession>B7WNY4</accession>
<accession>B7WP53</accession>
<accession>E9PDU4</accession>
<accession>E9PF23</accession>
<accession>F8WD13</accession>
<accession>Q96CZ7</accession>
<accession>Q9HA14</accession>
<accession>Q9UH98</accession>
<protein>
    <recommendedName>
        <fullName evidence="22">SUN domain-containing protein 1</fullName>
    </recommendedName>
    <alternativeName>
        <fullName>Protein unc-84 homolog A</fullName>
    </alternativeName>
    <alternativeName>
        <fullName>Sad1/unc-84 protein-like 1</fullName>
    </alternativeName>
</protein>
<evidence type="ECO:0000250" key="1">
    <source>
        <dbReference type="UniProtKB" id="Q8BJS4"/>
    </source>
</evidence>
<evidence type="ECO:0000250" key="2">
    <source>
        <dbReference type="UniProtKB" id="Q9D666"/>
    </source>
</evidence>
<evidence type="ECO:0000250" key="3">
    <source>
        <dbReference type="UniProtKB" id="Q9UH99"/>
    </source>
</evidence>
<evidence type="ECO:0000255" key="4"/>
<evidence type="ECO:0000255" key="5">
    <source>
        <dbReference type="PROSITE-ProRule" id="PRU00802"/>
    </source>
</evidence>
<evidence type="ECO:0000269" key="6">
    <source>
    </source>
</evidence>
<evidence type="ECO:0000269" key="7">
    <source>
    </source>
</evidence>
<evidence type="ECO:0000269" key="8">
    <source>
    </source>
</evidence>
<evidence type="ECO:0000269" key="9">
    <source>
    </source>
</evidence>
<evidence type="ECO:0000269" key="10">
    <source>
    </source>
</evidence>
<evidence type="ECO:0000269" key="11">
    <source>
    </source>
</evidence>
<evidence type="ECO:0000269" key="12">
    <source>
    </source>
</evidence>
<evidence type="ECO:0000269" key="13">
    <source>
    </source>
</evidence>
<evidence type="ECO:0000269" key="14">
    <source>
    </source>
</evidence>
<evidence type="ECO:0000269" key="15">
    <source>
    </source>
</evidence>
<evidence type="ECO:0000269" key="16">
    <source>
    </source>
</evidence>
<evidence type="ECO:0000269" key="17">
    <source>
    </source>
</evidence>
<evidence type="ECO:0000269" key="18">
    <source>
    </source>
</evidence>
<evidence type="ECO:0000303" key="19">
    <source>
    </source>
</evidence>
<evidence type="ECO:0000303" key="20">
    <source>
    </source>
</evidence>
<evidence type="ECO:0000303" key="21">
    <source>
    </source>
</evidence>
<evidence type="ECO:0000305" key="22"/>
<evidence type="ECO:0000312" key="23">
    <source>
        <dbReference type="HGNC" id="HGNC:18587"/>
    </source>
</evidence>
<evidence type="ECO:0007744" key="24">
    <source>
    </source>
</evidence>
<evidence type="ECO:0007744" key="25">
    <source>
    </source>
</evidence>
<evidence type="ECO:0007744" key="26">
    <source>
    </source>
</evidence>
<evidence type="ECO:0007744" key="27">
    <source>
    </source>
</evidence>
<evidence type="ECO:0007744" key="28">
    <source>
    </source>
</evidence>
<evidence type="ECO:0007829" key="29">
    <source>
        <dbReference type="PDB" id="6R2I"/>
    </source>
</evidence>
<evidence type="ECO:0007829" key="30">
    <source>
        <dbReference type="PDB" id="7E34"/>
    </source>
</evidence>
<organism>
    <name type="scientific">Homo sapiens</name>
    <name type="common">Human</name>
    <dbReference type="NCBI Taxonomy" id="9606"/>
    <lineage>
        <taxon>Eukaryota</taxon>
        <taxon>Metazoa</taxon>
        <taxon>Chordata</taxon>
        <taxon>Craniata</taxon>
        <taxon>Vertebrata</taxon>
        <taxon>Euteleostomi</taxon>
        <taxon>Mammalia</taxon>
        <taxon>Eutheria</taxon>
        <taxon>Euarchontoglires</taxon>
        <taxon>Primates</taxon>
        <taxon>Haplorrhini</taxon>
        <taxon>Catarrhini</taxon>
        <taxon>Hominidae</taxon>
        <taxon>Homo</taxon>
    </lineage>
</organism>
<name>SUN1_HUMAN</name>
<comment type="function">
    <text evidence="2 12 13 16">As a component of the LINC (LInker of Nucleoskeleton and Cytoskeleton) complex involved in the connection between the nuclear lamina and the cytoskeleton (PubMed:18039933, PubMed:18396275). The nucleocytoplasmic interactions established by the LINC complex play an important role in the transmission of mechanical forces across the nuclear envelope and in nuclear movement and positioning (By similarity). Required for interkinetic nuclear migration (INM) and essential for nucleokinesis and centrosome-nucleus coupling during radial neuronal migration in the cerebral cortex and during glial migration (By similarity). Involved in telomere attachment to nuclear envelope in the prophase of meiosis implicating a SUN1/2:KASH5 LINC complex in which SUN1 and SUN2 seem to act at least partial redundantly (By similarity). Required for gametogenesis and involved in selective gene expression of coding and non-coding RNAs needed for gametogenesis (By similarity). Helps to define the distribution of nuclear pore complexes (NPCs) (By similarity). Required for efficient localization of SYNE4 in the nuclear envelope (By similarity). May be involved in nuclear remodeling during sperm head formation in spermatogenesis (By similarity). May play a role in DNA repair by suppressing non-homologous end joining repair to facilitate the repair of DNA cross-links (PubMed:24375709).</text>
</comment>
<comment type="subunit">
    <text evidence="2 10 11 12 13 14 15 17">Core component of the LINC complex which is composed of inner nuclear membrane SUN domain-containing proteins coupled to outer nuclear membrane KASH domain-containing nesprins. SUN and KASH domain-containing proteins seem to bind each other promiscuously; however, differentially expression of LINC complex constituents is giving rise to specific assemblies. At least SUN1/2-containing core LINC complexes are proposed to be hexameric composed of three protomers of each KASH and SUN domain-containing protein. Interacts with KASH5 (via the last 22 amino acids); this interaction mediates KASH5 telomere localization by forming a SUN1:KASH5 LINC complex. May interact with SYNE3. Interacts with SYNE2 and SYNE1; probably forming respective LINC complexes. Interacts with A-type lamin with a strong preference for unprocessed A-type lamin compared with the mature protein. Interaction with lamins B1 and C is hardly detectable. Interacts with NAT10. Interacts with EMD and TSNAX. Associates with the nuclear pore complex (NPC). Interacts with CCDC79/TERB1; promoting the accumulation of the LINC complex complexes at the telomere-nuclear envelope attachment sites. Interacts (via KASH domain) with TMEM258 (PubMed:28716842).</text>
</comment>
<comment type="interaction">
    <interactant intactId="EBI-2796904">
        <id>O94901</id>
    </interactant>
    <interactant intactId="EBI-2839307">
        <id>Q12912</id>
        <label>IRAG2</label>
    </interactant>
    <organismsDiffer>false</organismsDiffer>
    <experiments>6</experiments>
</comment>
<comment type="interaction">
    <interactant intactId="EBI-2796904">
        <id>O94901</id>
    </interactant>
    <interactant intactId="EBI-749265">
        <id>Q8N6L0</id>
        <label>KASH5</label>
    </interactant>
    <organismsDiffer>false</organismsDiffer>
    <experiments>5</experiments>
</comment>
<comment type="interaction">
    <interactant intactId="EBI-2796904">
        <id>O94901</id>
    </interactant>
    <interactant intactId="EBI-351935">
        <id>P02545</id>
        <label>LMNA</label>
    </interactant>
    <organismsDiffer>false</organismsDiffer>
    <experiments>2</experiments>
</comment>
<comment type="interaction">
    <interactant intactId="EBI-2796904">
        <id>O94901</id>
    </interactant>
    <interactant intactId="EBI-2796904">
        <id>O94901</id>
        <label>SUN1</label>
    </interactant>
    <organismsDiffer>false</organismsDiffer>
    <experiments>3</experiments>
</comment>
<comment type="interaction">
    <interactant intactId="EBI-2796904">
        <id>O94901</id>
    </interactant>
    <interactant intactId="EBI-928867">
        <id>Q8NF91</id>
        <label>SYNE1</label>
    </interactant>
    <organismsDiffer>false</organismsDiffer>
    <experiments>6</experiments>
</comment>
<comment type="interaction">
    <interactant intactId="EBI-2796904">
        <id>O94901</id>
    </interactant>
    <interactant intactId="EBI-6170938">
        <id>Q8NF91-1</id>
        <label>SYNE1</label>
    </interactant>
    <organismsDiffer>false</organismsDiffer>
    <experiments>2</experiments>
</comment>
<comment type="interaction">
    <interactant intactId="EBI-2796904">
        <id>O94901</id>
    </interactant>
    <interactant intactId="EBI-6170976">
        <id>Q8WXH0-1</id>
        <label>SYNE2</label>
    </interactant>
    <organismsDiffer>false</organismsDiffer>
    <experiments>2</experiments>
</comment>
<comment type="interaction">
    <interactant intactId="EBI-2796904">
        <id>O94901</id>
    </interactant>
    <interactant intactId="EBI-7131783">
        <id>Q8N205</id>
        <label>SYNE4</label>
    </interactant>
    <organismsDiffer>false</organismsDiffer>
    <experiments>7</experiments>
</comment>
<comment type="subcellular location">
    <subcellularLocation>
        <location evidence="6 9 10 14 15">Nucleus inner membrane</location>
        <topology evidence="6 9 10 14 15">Single-pass type II membrane protein</topology>
    </subcellularLocation>
    <text evidence="2">At oocyte MI stage localized around the spindle, at MII stage localized to the spindle poles.</text>
</comment>
<comment type="alternative products">
    <event type="alternative splicing"/>
    <isoform>
        <id>O94901-8</id>
        <name>1</name>
        <sequence type="displayed"/>
    </isoform>
    <isoform>
        <id>O94901-2</id>
        <name>2</name>
        <sequence type="described" ref="VSP_061224 VSP_061225"/>
    </isoform>
    <isoform>
        <id>O94901-3</id>
        <name>3</name>
        <sequence type="described" ref="VSP_061223 VSP_061226"/>
    </isoform>
    <isoform>
        <id>O94901-4</id>
        <name>4</name>
        <sequence type="described" ref="VSP_061218 VSP_061219"/>
    </isoform>
    <isoform>
        <id>O94901-5</id>
        <name>5</name>
        <sequence type="described" ref="VSP_061216 VSP_061221"/>
    </isoform>
    <isoform>
        <id>O94901-6</id>
        <name>6</name>
        <sequence type="described" ref="VSP_061220"/>
    </isoform>
    <isoform>
        <id>O94901-7</id>
        <name>7</name>
        <sequence type="described" ref="VSP_061217 VSP_061224 VSP_061225"/>
    </isoform>
    <isoform>
        <id>O94901-9</id>
        <name>8</name>
        <sequence type="described" ref="VSP_061222"/>
    </isoform>
</comment>
<comment type="domain">
    <text evidence="1 3">The coiled coil domains differentially mediate trimerization required for binding to nesprins and are proposed to dynamically regulate the oligomeric state by locking the SUN domain in an inactive confirmation. The coiled coil domains are proposed to be involved in load-bearing and force transmission from the cytoskeleton.</text>
</comment>
<comment type="domain">
    <text evidence="15">The SUN domain may play a role in nuclear anchoring and/or migration.</text>
</comment>
<comment type="PTM">
    <text evidence="3">The disulfide bond with KASH domain-containing nesprins is required for stability of the respective LINC complexes under tensile forces.</text>
</comment>
<comment type="sequence caution" evidence="22">
    <conflict type="erroneous initiation">
        <sequence resource="EMBL-CDS" id="BAA34530"/>
    </conflict>
    <text>Extended N-terminus.</text>
</comment>
<comment type="sequence caution" evidence="22">
    <conflict type="miscellaneous discrepancy">
        <sequence resource="EMBL-CDS" id="BAA34530"/>
    </conflict>
    <text>Probable cloning artifact.</text>
</comment>
<proteinExistence type="evidence at protein level"/>
<reference key="1">
    <citation type="journal article" date="1998" name="DNA Res.">
        <title>Prediction of the coding sequences of unidentified human genes. XI. The complete sequences of 100 new cDNA clones from brain which code for large proteins in vitro.</title>
        <authorList>
            <person name="Nagase T."/>
            <person name="Ishikawa K."/>
            <person name="Suyama M."/>
            <person name="Kikuno R."/>
            <person name="Miyajima N."/>
            <person name="Tanaka A."/>
            <person name="Kotani H."/>
            <person name="Nomura N."/>
            <person name="Ohara O."/>
        </authorList>
    </citation>
    <scope>NUCLEOTIDE SEQUENCE [LARGE SCALE MRNA] (ISOFORM 1)</scope>
    <scope>VARIANT TYR-118</scope>
    <source>
        <tissue>Brain</tissue>
    </source>
</reference>
<reference key="2">
    <citation type="journal article" date="2004" name="Nat. Genet.">
        <title>Complete sequencing and characterization of 21,243 full-length human cDNAs.</title>
        <authorList>
            <person name="Ota T."/>
            <person name="Suzuki Y."/>
            <person name="Nishikawa T."/>
            <person name="Otsuki T."/>
            <person name="Sugiyama T."/>
            <person name="Irie R."/>
            <person name="Wakamatsu A."/>
            <person name="Hayashi K."/>
            <person name="Sato H."/>
            <person name="Nagai K."/>
            <person name="Kimura K."/>
            <person name="Makita H."/>
            <person name="Sekine M."/>
            <person name="Obayashi M."/>
            <person name="Nishi T."/>
            <person name="Shibahara T."/>
            <person name="Tanaka T."/>
            <person name="Ishii S."/>
            <person name="Yamamoto J."/>
            <person name="Saito K."/>
            <person name="Kawai Y."/>
            <person name="Isono Y."/>
            <person name="Nakamura Y."/>
            <person name="Nagahari K."/>
            <person name="Murakami K."/>
            <person name="Yasuda T."/>
            <person name="Iwayanagi T."/>
            <person name="Wagatsuma M."/>
            <person name="Shiratori A."/>
            <person name="Sudo H."/>
            <person name="Hosoiri T."/>
            <person name="Kaku Y."/>
            <person name="Kodaira H."/>
            <person name="Kondo H."/>
            <person name="Sugawara M."/>
            <person name="Takahashi M."/>
            <person name="Kanda K."/>
            <person name="Yokoi T."/>
            <person name="Furuya T."/>
            <person name="Kikkawa E."/>
            <person name="Omura Y."/>
            <person name="Abe K."/>
            <person name="Kamihara K."/>
            <person name="Katsuta N."/>
            <person name="Sato K."/>
            <person name="Tanikawa M."/>
            <person name="Yamazaki M."/>
            <person name="Ninomiya K."/>
            <person name="Ishibashi T."/>
            <person name="Yamashita H."/>
            <person name="Murakawa K."/>
            <person name="Fujimori K."/>
            <person name="Tanai H."/>
            <person name="Kimata M."/>
            <person name="Watanabe M."/>
            <person name="Hiraoka S."/>
            <person name="Chiba Y."/>
            <person name="Ishida S."/>
            <person name="Ono Y."/>
            <person name="Takiguchi S."/>
            <person name="Watanabe S."/>
            <person name="Yosida M."/>
            <person name="Hotuta T."/>
            <person name="Kusano J."/>
            <person name="Kanehori K."/>
            <person name="Takahashi-Fujii A."/>
            <person name="Hara H."/>
            <person name="Tanase T.-O."/>
            <person name="Nomura Y."/>
            <person name="Togiya S."/>
            <person name="Komai F."/>
            <person name="Hara R."/>
            <person name="Takeuchi K."/>
            <person name="Arita M."/>
            <person name="Imose N."/>
            <person name="Musashino K."/>
            <person name="Yuuki H."/>
            <person name="Oshima A."/>
            <person name="Sasaki N."/>
            <person name="Aotsuka S."/>
            <person name="Yoshikawa Y."/>
            <person name="Matsunawa H."/>
            <person name="Ichihara T."/>
            <person name="Shiohata N."/>
            <person name="Sano S."/>
            <person name="Moriya S."/>
            <person name="Momiyama H."/>
            <person name="Satoh N."/>
            <person name="Takami S."/>
            <person name="Terashima Y."/>
            <person name="Suzuki O."/>
            <person name="Nakagawa S."/>
            <person name="Senoh A."/>
            <person name="Mizoguchi H."/>
            <person name="Goto Y."/>
            <person name="Shimizu F."/>
            <person name="Wakebe H."/>
            <person name="Hishigaki H."/>
            <person name="Watanabe T."/>
            <person name="Sugiyama A."/>
            <person name="Takemoto M."/>
            <person name="Kawakami B."/>
            <person name="Yamazaki M."/>
            <person name="Watanabe K."/>
            <person name="Kumagai A."/>
            <person name="Itakura S."/>
            <person name="Fukuzumi Y."/>
            <person name="Fujimori Y."/>
            <person name="Komiyama M."/>
            <person name="Tashiro H."/>
            <person name="Tanigami A."/>
            <person name="Fujiwara T."/>
            <person name="Ono T."/>
            <person name="Yamada K."/>
            <person name="Fujii Y."/>
            <person name="Ozaki K."/>
            <person name="Hirao M."/>
            <person name="Ohmori Y."/>
            <person name="Kawabata A."/>
            <person name="Hikiji T."/>
            <person name="Kobatake N."/>
            <person name="Inagaki H."/>
            <person name="Ikema Y."/>
            <person name="Okamoto S."/>
            <person name="Okitani R."/>
            <person name="Kawakami T."/>
            <person name="Noguchi S."/>
            <person name="Itoh T."/>
            <person name="Shigeta K."/>
            <person name="Senba T."/>
            <person name="Matsumura K."/>
            <person name="Nakajima Y."/>
            <person name="Mizuno T."/>
            <person name="Morinaga M."/>
            <person name="Sasaki M."/>
            <person name="Togashi T."/>
            <person name="Oyama M."/>
            <person name="Hata H."/>
            <person name="Watanabe M."/>
            <person name="Komatsu T."/>
            <person name="Mizushima-Sugano J."/>
            <person name="Satoh T."/>
            <person name="Shirai Y."/>
            <person name="Takahashi Y."/>
            <person name="Nakagawa K."/>
            <person name="Okumura K."/>
            <person name="Nagase T."/>
            <person name="Nomura N."/>
            <person name="Kikuchi H."/>
            <person name="Masuho Y."/>
            <person name="Yamashita R."/>
            <person name="Nakai K."/>
            <person name="Yada T."/>
            <person name="Nakamura Y."/>
            <person name="Ohara O."/>
            <person name="Isogai T."/>
            <person name="Sugano S."/>
        </authorList>
    </citation>
    <scope>NUCLEOTIDE SEQUENCE [LARGE SCALE MRNA] (ISOFORMS 3; 5; 6 AND 7)</scope>
    <scope>VARIANT TYR-118</scope>
    <source>
        <tissue>Mammary gland</tissue>
        <tissue>Substantia nigra</tissue>
        <tissue>Testis</tissue>
    </source>
</reference>
<reference key="3">
    <citation type="journal article" date="2007" name="BMC Genomics">
        <title>The full-ORF clone resource of the German cDNA consortium.</title>
        <authorList>
            <person name="Bechtel S."/>
            <person name="Rosenfelder H."/>
            <person name="Duda A."/>
            <person name="Schmidt C.P."/>
            <person name="Ernst U."/>
            <person name="Wellenreuther R."/>
            <person name="Mehrle A."/>
            <person name="Schuster C."/>
            <person name="Bahr A."/>
            <person name="Bloecker H."/>
            <person name="Heubner D."/>
            <person name="Hoerlein A."/>
            <person name="Michel G."/>
            <person name="Wedler H."/>
            <person name="Koehrer K."/>
            <person name="Ottenwaelder B."/>
            <person name="Poustka A."/>
            <person name="Wiemann S."/>
            <person name="Schupp I."/>
        </authorList>
    </citation>
    <scope>NUCLEOTIDE SEQUENCE [LARGE SCALE MRNA] (ISOFORM 4)</scope>
    <source>
        <tissue>Cerebellum</tissue>
    </source>
</reference>
<reference key="4">
    <citation type="journal article" date="2003" name="Nature">
        <title>The DNA sequence of human chromosome 7.</title>
        <authorList>
            <person name="Hillier L.W."/>
            <person name="Fulton R.S."/>
            <person name="Fulton L.A."/>
            <person name="Graves T.A."/>
            <person name="Pepin K.H."/>
            <person name="Wagner-McPherson C."/>
            <person name="Layman D."/>
            <person name="Maas J."/>
            <person name="Jaeger S."/>
            <person name="Walker R."/>
            <person name="Wylie K."/>
            <person name="Sekhon M."/>
            <person name="Becker M.C."/>
            <person name="O'Laughlin M.D."/>
            <person name="Schaller M.E."/>
            <person name="Fewell G.A."/>
            <person name="Delehaunty K.D."/>
            <person name="Miner T.L."/>
            <person name="Nash W.E."/>
            <person name="Cordes M."/>
            <person name="Du H."/>
            <person name="Sun H."/>
            <person name="Edwards J."/>
            <person name="Bradshaw-Cordum H."/>
            <person name="Ali J."/>
            <person name="Andrews S."/>
            <person name="Isak A."/>
            <person name="Vanbrunt A."/>
            <person name="Nguyen C."/>
            <person name="Du F."/>
            <person name="Lamar B."/>
            <person name="Courtney L."/>
            <person name="Kalicki J."/>
            <person name="Ozersky P."/>
            <person name="Bielicki L."/>
            <person name="Scott K."/>
            <person name="Holmes A."/>
            <person name="Harkins R."/>
            <person name="Harris A."/>
            <person name="Strong C.M."/>
            <person name="Hou S."/>
            <person name="Tomlinson C."/>
            <person name="Dauphin-Kohlberg S."/>
            <person name="Kozlowicz-Reilly A."/>
            <person name="Leonard S."/>
            <person name="Rohlfing T."/>
            <person name="Rock S.M."/>
            <person name="Tin-Wollam A.-M."/>
            <person name="Abbott A."/>
            <person name="Minx P."/>
            <person name="Maupin R."/>
            <person name="Strowmatt C."/>
            <person name="Latreille P."/>
            <person name="Miller N."/>
            <person name="Johnson D."/>
            <person name="Murray J."/>
            <person name="Woessner J.P."/>
            <person name="Wendl M.C."/>
            <person name="Yang S.-P."/>
            <person name="Schultz B.R."/>
            <person name="Wallis J.W."/>
            <person name="Spieth J."/>
            <person name="Bieri T.A."/>
            <person name="Nelson J.O."/>
            <person name="Berkowicz N."/>
            <person name="Wohldmann P.E."/>
            <person name="Cook L.L."/>
            <person name="Hickenbotham M.T."/>
            <person name="Eldred J."/>
            <person name="Williams D."/>
            <person name="Bedell J.A."/>
            <person name="Mardis E.R."/>
            <person name="Clifton S.W."/>
            <person name="Chissoe S.L."/>
            <person name="Marra M.A."/>
            <person name="Raymond C."/>
            <person name="Haugen E."/>
            <person name="Gillett W."/>
            <person name="Zhou Y."/>
            <person name="James R."/>
            <person name="Phelps K."/>
            <person name="Iadanoto S."/>
            <person name="Bubb K."/>
            <person name="Simms E."/>
            <person name="Levy R."/>
            <person name="Clendenning J."/>
            <person name="Kaul R."/>
            <person name="Kent W.J."/>
            <person name="Furey T.S."/>
            <person name="Baertsch R.A."/>
            <person name="Brent M.R."/>
            <person name="Keibler E."/>
            <person name="Flicek P."/>
            <person name="Bork P."/>
            <person name="Suyama M."/>
            <person name="Bailey J.A."/>
            <person name="Portnoy M.E."/>
            <person name="Torrents D."/>
            <person name="Chinwalla A.T."/>
            <person name="Gish W.R."/>
            <person name="Eddy S.R."/>
            <person name="McPherson J.D."/>
            <person name="Olson M.V."/>
            <person name="Eichler E.E."/>
            <person name="Green E.D."/>
            <person name="Waterston R.H."/>
            <person name="Wilson R.K."/>
        </authorList>
    </citation>
    <scope>NUCLEOTIDE SEQUENCE [LARGE SCALE GENOMIC DNA]</scope>
</reference>
<reference key="5">
    <citation type="journal article" date="2004" name="Genome Res.">
        <title>The status, quality, and expansion of the NIH full-length cDNA project: the Mammalian Gene Collection (MGC).</title>
        <authorList>
            <consortium name="The MGC Project Team"/>
        </authorList>
    </citation>
    <scope>NUCLEOTIDE SEQUENCE [LARGE SCALE MRNA] (ISOFORMS 1 AND 2)</scope>
    <scope>VARIANT TYR-118</scope>
    <source>
        <tissue>Ovary</tissue>
    </source>
</reference>
<reference key="6">
    <citation type="journal article" date="1999" name="Development">
        <title>UNC-84 localizes to the nuclear envelope and is required for nuclear migration and anchoring during C. elegans development.</title>
        <authorList>
            <person name="Malone C.J."/>
            <person name="Fixsen W.D."/>
            <person name="Horvitz H.R."/>
            <person name="Han M."/>
        </authorList>
    </citation>
    <scope>NUCLEOTIDE SEQUENCE [MRNA] OF 362-785</scope>
</reference>
<reference key="7">
    <citation type="journal article" date="2003" name="Science">
        <title>Nuclear membrane proteins with potential disease links found by subtractive proteomics.</title>
        <authorList>
            <person name="Schirmer E.C."/>
            <person name="Florens L."/>
            <person name="Guan T."/>
            <person name="Yates J.R. III"/>
            <person name="Gerace L."/>
        </authorList>
    </citation>
    <scope>IDENTIFICATION BY MASS SPECTROMETRY</scope>
    <scope>SUBCELLULAR LOCATION</scope>
</reference>
<reference key="8">
    <citation type="journal article" date="2006" name="Cell">
        <title>Global, in vivo, and site-specific phosphorylation dynamics in signaling networks.</title>
        <authorList>
            <person name="Olsen J.V."/>
            <person name="Blagoev B."/>
            <person name="Gnad F."/>
            <person name="Macek B."/>
            <person name="Kumar C."/>
            <person name="Mortensen P."/>
            <person name="Mann M."/>
        </authorList>
    </citation>
    <scope>PHOSPHORYLATION [LARGE SCALE ANALYSIS] AT SER-138</scope>
    <scope>IDENTIFICATION BY MASS SPECTROMETRY [LARGE SCALE ANALYSIS]</scope>
    <source>
        <tissue>Cervix carcinoma</tissue>
    </source>
</reference>
<reference key="9">
    <citation type="journal article" date="2007" name="J. Cell Biol.">
        <title>Telomere anchoring at the nuclear periphery requires the budding yeast Sad1-UNC-84 domain protein Mps3.</title>
        <authorList>
            <person name="Bupp J.M."/>
            <person name="Martin A.E."/>
            <person name="Stensrud E.S."/>
            <person name="Jaspersen S.L."/>
        </authorList>
    </citation>
    <scope>FUNCTION</scope>
    <scope>INTERACTION WITH MPS3</scope>
</reference>
<reference key="10">
    <citation type="journal article" date="2006" name="DNA Cell Biol.">
        <title>Characterization of the structures involved in localization of the SUN proteins to the nuclear envelope and the centrosome.</title>
        <authorList>
            <person name="Wang Q."/>
            <person name="Du X."/>
            <person name="Cai Z."/>
            <person name="Greene M.I."/>
        </authorList>
    </citation>
    <scope>SUBCELLULAR LOCATION</scope>
    <scope>SUBUNIT</scope>
    <scope>ASSOCIATION WITH THE CENTROSOME</scope>
</reference>
<reference key="11">
    <citation type="journal article" date="2006" name="FEBS Lett.">
        <title>Nuclear envelope localization of human UNC84A does not require nuclear lamins.</title>
        <authorList>
            <person name="Hasan S."/>
            <person name="Guttinger S."/>
            <person name="Muhlhausser P."/>
            <person name="Anderegg F."/>
            <person name="Burgler S."/>
            <person name="Kutay U."/>
        </authorList>
    </citation>
    <scope>SUBCELLULAR LOCATION</scope>
</reference>
<reference key="12">
    <citation type="journal article" date="2007" name="J. Biol. Chem.">
        <title>Histone acetyltransferase hALP and nuclear membrane protein hsSUN1 function in de-condensation of mitotic chromosomes.</title>
        <authorList>
            <person name="Chi Y.-H."/>
            <person name="Haller K."/>
            <person name="Peloponese J.-M. Jr."/>
            <person name="Jeang K.-T."/>
        </authorList>
    </citation>
    <scope>INTERACTION WITH NAT10</scope>
</reference>
<reference key="13">
    <citation type="journal article" date="2008" name="Biochim. Biophys. Acta">
        <title>Sun1 forms immobile macromolecular assemblies at the nuclear envelope.</title>
        <authorList>
            <person name="Lu W."/>
            <person name="Gotzmann J."/>
            <person name="Sironi L."/>
            <person name="Jaeger V.M."/>
            <person name="Schneider M."/>
            <person name="Luke Y."/>
            <person name="Uhlen M."/>
            <person name="Szigyarto C.A."/>
            <person name="Brachner A."/>
            <person name="Ellenberg J."/>
            <person name="Foisner R."/>
            <person name="Noegel A.A."/>
            <person name="Karakesisoglou I."/>
        </authorList>
    </citation>
    <scope>SUBCELLULAR LOCATION</scope>
    <scope>TOPOLOGY</scope>
    <scope>SUBUNIT</scope>
    <scope>INTERACTION WITH SUN2</scope>
</reference>
<reference key="14">
    <citation type="journal article" date="2008" name="Exp. Cell Res.">
        <title>Structural requirements for the assembly of LINC complexes and their function in cellular mechanical stiffness.</title>
        <authorList>
            <person name="Stewart-Hutchinson P.J."/>
            <person name="Hale C.M."/>
            <person name="Wirtz D."/>
            <person name="Hodzic D."/>
        </authorList>
    </citation>
    <scope>INTERACTION WITH SYNE1; SYNE2 AND SYNE3</scope>
    <scope>FUNCTION OF THE LINC COMPLEXES</scope>
</reference>
<reference key="15">
    <citation type="journal article" date="2008" name="Proc. Natl. Acad. Sci. U.S.A.">
        <title>A quantitative atlas of mitotic phosphorylation.</title>
        <authorList>
            <person name="Dephoure N."/>
            <person name="Zhou C."/>
            <person name="Villen J."/>
            <person name="Beausoleil S.A."/>
            <person name="Bakalarski C.E."/>
            <person name="Elledge S.J."/>
            <person name="Gygi S.P."/>
        </authorList>
    </citation>
    <scope>IDENTIFICATION BY MASS SPECTROMETRY [LARGE SCALE ANALYSIS]</scope>
    <source>
        <tissue>Cervix carcinoma</tissue>
    </source>
</reference>
<reference key="16">
    <citation type="journal article" date="2010" name="J. Biol. Chem.">
        <title>Mammalian SUN protein interaction networks at the inner nuclear membrane and their role in laminopathy disease processes.</title>
        <authorList>
            <person name="Haque F."/>
            <person name="Mazzeo D."/>
            <person name="Patel J.T."/>
            <person name="Smallwood D.T."/>
            <person name="Ellis J.A."/>
            <person name="Shanahan C.M."/>
            <person name="Shackleton S."/>
        </authorList>
    </citation>
    <scope>SUBCELLULAR LOCATION</scope>
    <scope>INTERACTION WITH EMD; LMNA AND SYNE2</scope>
    <scope>DOMAIN</scope>
    <scope>ASSOCIATION WITH THE NUCLEOSKELETON</scope>
</reference>
<reference key="17">
    <citation type="journal article" date="2010" name="Sci. Signal.">
        <title>Quantitative phosphoproteomics reveals widespread full phosphorylation site occupancy during mitosis.</title>
        <authorList>
            <person name="Olsen J.V."/>
            <person name="Vermeulen M."/>
            <person name="Santamaria A."/>
            <person name="Kumar C."/>
            <person name="Miller M.L."/>
            <person name="Jensen L.J."/>
            <person name="Gnad F."/>
            <person name="Cox J."/>
            <person name="Jensen T.S."/>
            <person name="Nigg E.A."/>
            <person name="Brunak S."/>
            <person name="Mann M."/>
        </authorList>
    </citation>
    <scope>PHOSPHORYLATION [LARGE SCALE ANALYSIS] AT SER-100 AND SER-138</scope>
    <scope>PHOSPHORYLATION [LARGE SCALE ANALYSIS] AT SER-333 (ISOFORM 8)</scope>
    <scope>IDENTIFICATION BY MASS SPECTROMETRY [LARGE SCALE ANALYSIS]</scope>
    <source>
        <tissue>Cervix carcinoma</tissue>
    </source>
</reference>
<reference key="18">
    <citation type="journal article" date="2013" name="J. Proteome Res.">
        <title>Toward a comprehensive characterization of a human cancer cell phosphoproteome.</title>
        <authorList>
            <person name="Zhou H."/>
            <person name="Di Palma S."/>
            <person name="Preisinger C."/>
            <person name="Peng M."/>
            <person name="Polat A.N."/>
            <person name="Heck A.J."/>
            <person name="Mohammed S."/>
        </authorList>
    </citation>
    <scope>PHOSPHORYLATION [LARGE SCALE ANALYSIS] AT SER-48; SER-138 AND SER-344</scope>
    <scope>IDENTIFICATION BY MASS SPECTROMETRY [LARGE SCALE ANALYSIS]</scope>
    <source>
        <tissue>Cervix carcinoma</tissue>
        <tissue>Erythroleukemia</tissue>
    </source>
</reference>
<reference key="19">
    <citation type="journal article" date="2014" name="J. Proteomics">
        <title>An enzyme assisted RP-RPLC approach for in-depth analysis of human liver phosphoproteome.</title>
        <authorList>
            <person name="Bian Y."/>
            <person name="Song C."/>
            <person name="Cheng K."/>
            <person name="Dong M."/>
            <person name="Wang F."/>
            <person name="Huang J."/>
            <person name="Sun D."/>
            <person name="Wang L."/>
            <person name="Ye M."/>
            <person name="Zou H."/>
        </authorList>
    </citation>
    <scope>PHOSPHORYLATION [LARGE SCALE ANALYSIS] AT SER-138</scope>
    <scope>IDENTIFICATION BY MASS SPECTROMETRY [LARGE SCALE ANALYSIS]</scope>
    <source>
        <tissue>Liver</tissue>
    </source>
</reference>
<reference key="20">
    <citation type="journal article" date="2017" name="Nat. Struct. Mol. Biol.">
        <title>Site-specific mapping of the human SUMO proteome reveals co-modification with phosphorylation.</title>
        <authorList>
            <person name="Hendriks I.A."/>
            <person name="Lyon D."/>
            <person name="Young C."/>
            <person name="Jensen L.J."/>
            <person name="Vertegaal A.C."/>
            <person name="Nielsen M.L."/>
        </authorList>
    </citation>
    <scope>SUMOYLATION [LARGE SCALE ANALYSIS] AT LYS-195</scope>
    <scope>IDENTIFICATION BY MASS SPECTROMETRY [LARGE SCALE ANALYSIS]</scope>
</reference>
<reference key="21">
    <citation type="journal article" date="2016" name="J. Cell Biol.">
        <title>LINC complexes promote homologous recombination in part through inhibition of nonhomologous end joining.</title>
        <authorList>
            <person name="Lawrence K.S."/>
            <person name="Tapley E.C."/>
            <person name="Cruz V.E."/>
            <person name="Li Q."/>
            <person name="Aung K."/>
            <person name="Hart K.C."/>
            <person name="Schwartz T.U."/>
            <person name="Starr D.A."/>
            <person name="Engebrecht J."/>
        </authorList>
    </citation>
    <scope>FUNCTION</scope>
</reference>
<reference key="22">
    <citation type="journal article" date="2017" name="J. Cell Biol.">
        <title>Outer nuclear membrane protein Kuduk modulates the LINC complex and nuclear envelope architecture.</title>
        <authorList>
            <person name="Ding Z.Y."/>
            <person name="Wang Y.H."/>
            <person name="Huang Y.C."/>
            <person name="Lee M.C."/>
            <person name="Tseng M.J."/>
            <person name="Chi Y.H."/>
            <person name="Huang M.L."/>
        </authorList>
    </citation>
    <scope>INTERACTION WITH TMEM258</scope>
</reference>
<reference key="23">
    <citation type="journal article" date="2014" name="Hum. Mutat.">
        <title>Contribution of SUN1 mutations to the pathomechanism in muscular dystrophies.</title>
        <authorList>
            <person name="Li P."/>
            <person name="Meinke P."/>
            <person name="Huong Le T.T."/>
            <person name="Wehnert M."/>
            <person name="Noegel A.A."/>
        </authorList>
    </citation>
    <scope>VARIANTS VAL-203 AND VAL-587</scope>
</reference>